<proteinExistence type="inferred from homology"/>
<evidence type="ECO:0000255" key="1">
    <source>
        <dbReference type="HAMAP-Rule" id="MF_01368"/>
    </source>
</evidence>
<evidence type="ECO:0000305" key="2"/>
<protein>
    <recommendedName>
        <fullName evidence="1">Large ribosomal subunit protein bL17</fullName>
    </recommendedName>
    <alternativeName>
        <fullName evidence="2">50S ribosomal protein L17</fullName>
    </alternativeName>
</protein>
<name>RL17_SALTI</name>
<organism>
    <name type="scientific">Salmonella typhi</name>
    <dbReference type="NCBI Taxonomy" id="90370"/>
    <lineage>
        <taxon>Bacteria</taxon>
        <taxon>Pseudomonadati</taxon>
        <taxon>Pseudomonadota</taxon>
        <taxon>Gammaproteobacteria</taxon>
        <taxon>Enterobacterales</taxon>
        <taxon>Enterobacteriaceae</taxon>
        <taxon>Salmonella</taxon>
    </lineage>
</organism>
<gene>
    <name evidence="1" type="primary">rplQ</name>
    <name type="ordered locus">STY4384</name>
    <name type="ordered locus">t4091</name>
</gene>
<accession>Q8XF03</accession>
<accession>Q7ALR9</accession>
<dbReference type="EMBL" id="AE014613">
    <property type="protein sequence ID" value="AAO71558.1"/>
    <property type="molecule type" value="Genomic_DNA"/>
</dbReference>
<dbReference type="EMBL" id="AL513382">
    <property type="protein sequence ID" value="CAD09172.1"/>
    <property type="molecule type" value="Genomic_DNA"/>
</dbReference>
<dbReference type="RefSeq" id="NP_458486.1">
    <property type="nucleotide sequence ID" value="NC_003198.1"/>
</dbReference>
<dbReference type="RefSeq" id="WP_001216370.1">
    <property type="nucleotide sequence ID" value="NZ_WSUR01000046.1"/>
</dbReference>
<dbReference type="SMR" id="Q8XF03"/>
<dbReference type="STRING" id="220341.gene:17588212"/>
<dbReference type="GeneID" id="89546962"/>
<dbReference type="KEGG" id="stt:t4091"/>
<dbReference type="KEGG" id="sty:STY4384"/>
<dbReference type="PATRIC" id="fig|220341.7.peg.4480"/>
<dbReference type="eggNOG" id="COG0203">
    <property type="taxonomic scope" value="Bacteria"/>
</dbReference>
<dbReference type="HOGENOM" id="CLU_074407_2_0_6"/>
<dbReference type="OMA" id="EHKRINT"/>
<dbReference type="OrthoDB" id="9809073at2"/>
<dbReference type="Proteomes" id="UP000000541">
    <property type="component" value="Chromosome"/>
</dbReference>
<dbReference type="Proteomes" id="UP000002670">
    <property type="component" value="Chromosome"/>
</dbReference>
<dbReference type="GO" id="GO:0022625">
    <property type="term" value="C:cytosolic large ribosomal subunit"/>
    <property type="evidence" value="ECO:0007669"/>
    <property type="project" value="TreeGrafter"/>
</dbReference>
<dbReference type="GO" id="GO:0003735">
    <property type="term" value="F:structural constituent of ribosome"/>
    <property type="evidence" value="ECO:0007669"/>
    <property type="project" value="InterPro"/>
</dbReference>
<dbReference type="GO" id="GO:0006412">
    <property type="term" value="P:translation"/>
    <property type="evidence" value="ECO:0007669"/>
    <property type="project" value="UniProtKB-UniRule"/>
</dbReference>
<dbReference type="FunFam" id="3.90.1030.10:FF:000001">
    <property type="entry name" value="50S ribosomal protein L17"/>
    <property type="match status" value="1"/>
</dbReference>
<dbReference type="Gene3D" id="3.90.1030.10">
    <property type="entry name" value="Ribosomal protein L17"/>
    <property type="match status" value="1"/>
</dbReference>
<dbReference type="HAMAP" id="MF_01368">
    <property type="entry name" value="Ribosomal_bL17"/>
    <property type="match status" value="1"/>
</dbReference>
<dbReference type="InterPro" id="IPR000456">
    <property type="entry name" value="Ribosomal_bL17"/>
</dbReference>
<dbReference type="InterPro" id="IPR047859">
    <property type="entry name" value="Ribosomal_bL17_CS"/>
</dbReference>
<dbReference type="InterPro" id="IPR036373">
    <property type="entry name" value="Ribosomal_bL17_sf"/>
</dbReference>
<dbReference type="NCBIfam" id="TIGR00059">
    <property type="entry name" value="L17"/>
    <property type="match status" value="1"/>
</dbReference>
<dbReference type="PANTHER" id="PTHR14413:SF16">
    <property type="entry name" value="LARGE RIBOSOMAL SUBUNIT PROTEIN BL17M"/>
    <property type="match status" value="1"/>
</dbReference>
<dbReference type="PANTHER" id="PTHR14413">
    <property type="entry name" value="RIBOSOMAL PROTEIN L17"/>
    <property type="match status" value="1"/>
</dbReference>
<dbReference type="Pfam" id="PF01196">
    <property type="entry name" value="Ribosomal_L17"/>
    <property type="match status" value="1"/>
</dbReference>
<dbReference type="SUPFAM" id="SSF64263">
    <property type="entry name" value="Prokaryotic ribosomal protein L17"/>
    <property type="match status" value="1"/>
</dbReference>
<dbReference type="PROSITE" id="PS01167">
    <property type="entry name" value="RIBOSOMAL_L17"/>
    <property type="match status" value="1"/>
</dbReference>
<keyword id="KW-0687">Ribonucleoprotein</keyword>
<keyword id="KW-0689">Ribosomal protein</keyword>
<feature type="chain" id="PRO_0000267939" description="Large ribosomal subunit protein bL17">
    <location>
        <begin position="1"/>
        <end position="127"/>
    </location>
</feature>
<reference key="1">
    <citation type="journal article" date="2003" name="J. Bacteriol.">
        <title>Comparative genomics of Salmonella enterica serovar Typhi strains Ty2 and CT18.</title>
        <authorList>
            <person name="Deng W."/>
            <person name="Liou S.-R."/>
            <person name="Plunkett G. III"/>
            <person name="Mayhew G.F."/>
            <person name="Rose D.J."/>
            <person name="Burland V."/>
            <person name="Kodoyianni V."/>
            <person name="Schwartz D.C."/>
            <person name="Blattner F.R."/>
        </authorList>
    </citation>
    <scope>NUCLEOTIDE SEQUENCE [LARGE SCALE GENOMIC DNA]</scope>
    <source>
        <strain>ATCC 700931 / Ty2</strain>
    </source>
</reference>
<reference key="2">
    <citation type="journal article" date="2001" name="Nature">
        <title>Complete genome sequence of a multiple drug resistant Salmonella enterica serovar Typhi CT18.</title>
        <authorList>
            <person name="Parkhill J."/>
            <person name="Dougan G."/>
            <person name="James K.D."/>
            <person name="Thomson N.R."/>
            <person name="Pickard D."/>
            <person name="Wain J."/>
            <person name="Churcher C.M."/>
            <person name="Mungall K.L."/>
            <person name="Bentley S.D."/>
            <person name="Holden M.T.G."/>
            <person name="Sebaihia M."/>
            <person name="Baker S."/>
            <person name="Basham D."/>
            <person name="Brooks K."/>
            <person name="Chillingworth T."/>
            <person name="Connerton P."/>
            <person name="Cronin A."/>
            <person name="Davis P."/>
            <person name="Davies R.M."/>
            <person name="Dowd L."/>
            <person name="White N."/>
            <person name="Farrar J."/>
            <person name="Feltwell T."/>
            <person name="Hamlin N."/>
            <person name="Haque A."/>
            <person name="Hien T.T."/>
            <person name="Holroyd S."/>
            <person name="Jagels K."/>
            <person name="Krogh A."/>
            <person name="Larsen T.S."/>
            <person name="Leather S."/>
            <person name="Moule S."/>
            <person name="O'Gaora P."/>
            <person name="Parry C."/>
            <person name="Quail M.A."/>
            <person name="Rutherford K.M."/>
            <person name="Simmonds M."/>
            <person name="Skelton J."/>
            <person name="Stevens K."/>
            <person name="Whitehead S."/>
            <person name="Barrell B.G."/>
        </authorList>
    </citation>
    <scope>NUCLEOTIDE SEQUENCE [LARGE SCALE GENOMIC DNA]</scope>
    <source>
        <strain>CT18</strain>
    </source>
</reference>
<sequence length="127" mass="14395">MRHRKSGRQLNRNSSHRQAMFRNMAGSLVRHEIIKTTLPKAKELRRVVEPLITLAKTDSVANRRLAFARTRDNEIVAKLFNELGPRFASRAGGYTRILKCGFRAGDNAPMAYIELVDRSEKTEAAAE</sequence>
<comment type="subunit">
    <text evidence="1">Part of the 50S ribosomal subunit. Contacts protein L32.</text>
</comment>
<comment type="similarity">
    <text evidence="1">Belongs to the bacterial ribosomal protein bL17 family.</text>
</comment>